<feature type="chain" id="PRO_1000050349" description="Phosphoribosylformylglycinamidine synthase subunit PurL">
    <location>
        <begin position="1"/>
        <end position="743"/>
    </location>
</feature>
<feature type="active site" evidence="1">
    <location>
        <position position="50"/>
    </location>
</feature>
<feature type="active site" description="Proton acceptor" evidence="1">
    <location>
        <position position="96"/>
    </location>
</feature>
<feature type="binding site" evidence="1">
    <location>
        <position position="53"/>
    </location>
    <ligand>
        <name>ATP</name>
        <dbReference type="ChEBI" id="CHEBI:30616"/>
    </ligand>
</feature>
<feature type="binding site" evidence="1">
    <location>
        <position position="92"/>
    </location>
    <ligand>
        <name>ATP</name>
        <dbReference type="ChEBI" id="CHEBI:30616"/>
    </ligand>
</feature>
<feature type="binding site" evidence="1">
    <location>
        <position position="94"/>
    </location>
    <ligand>
        <name>Mg(2+)</name>
        <dbReference type="ChEBI" id="CHEBI:18420"/>
        <label>1</label>
    </ligand>
</feature>
<feature type="binding site" evidence="1">
    <location>
        <begin position="95"/>
        <end position="98"/>
    </location>
    <ligand>
        <name>substrate</name>
    </ligand>
</feature>
<feature type="binding site" evidence="1">
    <location>
        <position position="117"/>
    </location>
    <ligand>
        <name>substrate</name>
    </ligand>
</feature>
<feature type="binding site" evidence="1">
    <location>
        <position position="118"/>
    </location>
    <ligand>
        <name>Mg(2+)</name>
        <dbReference type="ChEBI" id="CHEBI:18420"/>
        <label>2</label>
    </ligand>
</feature>
<feature type="binding site" evidence="1">
    <location>
        <position position="241"/>
    </location>
    <ligand>
        <name>substrate</name>
    </ligand>
</feature>
<feature type="binding site" evidence="1">
    <location>
        <position position="269"/>
    </location>
    <ligand>
        <name>Mg(2+)</name>
        <dbReference type="ChEBI" id="CHEBI:18420"/>
        <label>2</label>
    </ligand>
</feature>
<feature type="binding site" evidence="1">
    <location>
        <begin position="313"/>
        <end position="315"/>
    </location>
    <ligand>
        <name>substrate</name>
    </ligand>
</feature>
<feature type="binding site" evidence="1">
    <location>
        <position position="494"/>
    </location>
    <ligand>
        <name>ATP</name>
        <dbReference type="ChEBI" id="CHEBI:30616"/>
    </ligand>
</feature>
<feature type="binding site" evidence="1">
    <location>
        <position position="531"/>
    </location>
    <ligand>
        <name>ATP</name>
        <dbReference type="ChEBI" id="CHEBI:30616"/>
    </ligand>
</feature>
<feature type="binding site" evidence="1">
    <location>
        <position position="532"/>
    </location>
    <ligand>
        <name>Mg(2+)</name>
        <dbReference type="ChEBI" id="CHEBI:18420"/>
        <label>1</label>
    </ligand>
</feature>
<feature type="binding site" evidence="1">
    <location>
        <position position="534"/>
    </location>
    <ligand>
        <name>substrate</name>
    </ligand>
</feature>
<keyword id="KW-0067">ATP-binding</keyword>
<keyword id="KW-0963">Cytoplasm</keyword>
<keyword id="KW-0436">Ligase</keyword>
<keyword id="KW-0460">Magnesium</keyword>
<keyword id="KW-0479">Metal-binding</keyword>
<keyword id="KW-0547">Nucleotide-binding</keyword>
<keyword id="KW-0658">Purine biosynthesis</keyword>
<comment type="function">
    <text evidence="1">Part of the phosphoribosylformylglycinamidine synthase complex involved in the purines biosynthetic pathway. Catalyzes the ATP-dependent conversion of formylglycinamide ribonucleotide (FGAR) and glutamine to yield formylglycinamidine ribonucleotide (FGAM) and glutamate. The FGAM synthase complex is composed of three subunits. PurQ produces an ammonia molecule by converting glutamine to glutamate. PurL transfers the ammonia molecule to FGAR to form FGAM in an ATP-dependent manner. PurS interacts with PurQ and PurL and is thought to assist in the transfer of the ammonia molecule from PurQ to PurL.</text>
</comment>
<comment type="catalytic activity">
    <reaction evidence="1">
        <text>N(2)-formyl-N(1)-(5-phospho-beta-D-ribosyl)glycinamide + L-glutamine + ATP + H2O = 2-formamido-N(1)-(5-O-phospho-beta-D-ribosyl)acetamidine + L-glutamate + ADP + phosphate + H(+)</text>
        <dbReference type="Rhea" id="RHEA:17129"/>
        <dbReference type="ChEBI" id="CHEBI:15377"/>
        <dbReference type="ChEBI" id="CHEBI:15378"/>
        <dbReference type="ChEBI" id="CHEBI:29985"/>
        <dbReference type="ChEBI" id="CHEBI:30616"/>
        <dbReference type="ChEBI" id="CHEBI:43474"/>
        <dbReference type="ChEBI" id="CHEBI:58359"/>
        <dbReference type="ChEBI" id="CHEBI:147286"/>
        <dbReference type="ChEBI" id="CHEBI:147287"/>
        <dbReference type="ChEBI" id="CHEBI:456216"/>
        <dbReference type="EC" id="6.3.5.3"/>
    </reaction>
</comment>
<comment type="pathway">
    <text evidence="1">Purine metabolism; IMP biosynthesis via de novo pathway; 5-amino-1-(5-phospho-D-ribosyl)imidazole from N(2)-formyl-N(1)-(5-phospho-D-ribosyl)glycinamide: step 1/2.</text>
</comment>
<comment type="subunit">
    <text evidence="1">Monomer. Part of the FGAM synthase complex composed of 1 PurL, 1 PurQ and 2 PurS subunits.</text>
</comment>
<comment type="subcellular location">
    <subcellularLocation>
        <location evidence="1">Cytoplasm</location>
    </subcellularLocation>
</comment>
<comment type="similarity">
    <text evidence="1">Belongs to the FGAMS family.</text>
</comment>
<dbReference type="EC" id="6.3.5.3" evidence="1"/>
<dbReference type="EMBL" id="CP000738">
    <property type="protein sequence ID" value="ABR60349.1"/>
    <property type="molecule type" value="Genomic_DNA"/>
</dbReference>
<dbReference type="RefSeq" id="WP_011975659.1">
    <property type="nucleotide sequence ID" value="NC_009636.1"/>
</dbReference>
<dbReference type="RefSeq" id="YP_001327184.1">
    <property type="nucleotide sequence ID" value="NC_009636.1"/>
</dbReference>
<dbReference type="SMR" id="A6U9L9"/>
<dbReference type="STRING" id="366394.Smed_1505"/>
<dbReference type="GeneID" id="61612738"/>
<dbReference type="KEGG" id="smd:Smed_1505"/>
<dbReference type="PATRIC" id="fig|366394.8.peg.4638"/>
<dbReference type="eggNOG" id="COG0046">
    <property type="taxonomic scope" value="Bacteria"/>
</dbReference>
<dbReference type="HOGENOM" id="CLU_003100_0_1_5"/>
<dbReference type="OrthoDB" id="9804441at2"/>
<dbReference type="UniPathway" id="UPA00074">
    <property type="reaction ID" value="UER00128"/>
</dbReference>
<dbReference type="Proteomes" id="UP000001108">
    <property type="component" value="Chromosome"/>
</dbReference>
<dbReference type="GO" id="GO:0005737">
    <property type="term" value="C:cytoplasm"/>
    <property type="evidence" value="ECO:0007669"/>
    <property type="project" value="UniProtKB-SubCell"/>
</dbReference>
<dbReference type="GO" id="GO:0005524">
    <property type="term" value="F:ATP binding"/>
    <property type="evidence" value="ECO:0007669"/>
    <property type="project" value="UniProtKB-UniRule"/>
</dbReference>
<dbReference type="GO" id="GO:0000287">
    <property type="term" value="F:magnesium ion binding"/>
    <property type="evidence" value="ECO:0007669"/>
    <property type="project" value="UniProtKB-UniRule"/>
</dbReference>
<dbReference type="GO" id="GO:0004642">
    <property type="term" value="F:phosphoribosylformylglycinamidine synthase activity"/>
    <property type="evidence" value="ECO:0007669"/>
    <property type="project" value="UniProtKB-UniRule"/>
</dbReference>
<dbReference type="GO" id="GO:0006189">
    <property type="term" value="P:'de novo' IMP biosynthetic process"/>
    <property type="evidence" value="ECO:0007669"/>
    <property type="project" value="UniProtKB-UniRule"/>
</dbReference>
<dbReference type="CDD" id="cd02203">
    <property type="entry name" value="PurL_repeat1"/>
    <property type="match status" value="1"/>
</dbReference>
<dbReference type="CDD" id="cd02204">
    <property type="entry name" value="PurL_repeat2"/>
    <property type="match status" value="1"/>
</dbReference>
<dbReference type="FunFam" id="3.30.1330.10:FF:000004">
    <property type="entry name" value="Phosphoribosylformylglycinamidine synthase subunit PurL"/>
    <property type="match status" value="1"/>
</dbReference>
<dbReference type="Gene3D" id="3.90.650.10">
    <property type="entry name" value="PurM-like C-terminal domain"/>
    <property type="match status" value="2"/>
</dbReference>
<dbReference type="Gene3D" id="3.30.1330.10">
    <property type="entry name" value="PurM-like, N-terminal domain"/>
    <property type="match status" value="2"/>
</dbReference>
<dbReference type="HAMAP" id="MF_00420">
    <property type="entry name" value="PurL_2"/>
    <property type="match status" value="1"/>
</dbReference>
<dbReference type="InterPro" id="IPR010074">
    <property type="entry name" value="PRibForGlyAmidine_synth_PurL"/>
</dbReference>
<dbReference type="InterPro" id="IPR041609">
    <property type="entry name" value="PurL_linker"/>
</dbReference>
<dbReference type="InterPro" id="IPR010918">
    <property type="entry name" value="PurM-like_C_dom"/>
</dbReference>
<dbReference type="InterPro" id="IPR036676">
    <property type="entry name" value="PurM-like_C_sf"/>
</dbReference>
<dbReference type="InterPro" id="IPR016188">
    <property type="entry name" value="PurM-like_N"/>
</dbReference>
<dbReference type="InterPro" id="IPR036921">
    <property type="entry name" value="PurM-like_N_sf"/>
</dbReference>
<dbReference type="NCBIfam" id="TIGR01736">
    <property type="entry name" value="FGAM_synth_II"/>
    <property type="match status" value="1"/>
</dbReference>
<dbReference type="NCBIfam" id="NF002290">
    <property type="entry name" value="PRK01213.1"/>
    <property type="match status" value="1"/>
</dbReference>
<dbReference type="PANTHER" id="PTHR43555">
    <property type="entry name" value="PHOSPHORIBOSYLFORMYLGLYCINAMIDINE SYNTHASE SUBUNIT PURL"/>
    <property type="match status" value="1"/>
</dbReference>
<dbReference type="PANTHER" id="PTHR43555:SF1">
    <property type="entry name" value="PHOSPHORIBOSYLFORMYLGLYCINAMIDINE SYNTHASE SUBUNIT PURL"/>
    <property type="match status" value="1"/>
</dbReference>
<dbReference type="Pfam" id="PF00586">
    <property type="entry name" value="AIRS"/>
    <property type="match status" value="2"/>
</dbReference>
<dbReference type="Pfam" id="PF02769">
    <property type="entry name" value="AIRS_C"/>
    <property type="match status" value="2"/>
</dbReference>
<dbReference type="Pfam" id="PF18072">
    <property type="entry name" value="FGAR-AT_linker"/>
    <property type="match status" value="1"/>
</dbReference>
<dbReference type="PIRSF" id="PIRSF001587">
    <property type="entry name" value="FGAM_synthase_II"/>
    <property type="match status" value="1"/>
</dbReference>
<dbReference type="SUPFAM" id="SSF56042">
    <property type="entry name" value="PurM C-terminal domain-like"/>
    <property type="match status" value="2"/>
</dbReference>
<dbReference type="SUPFAM" id="SSF55326">
    <property type="entry name" value="PurM N-terminal domain-like"/>
    <property type="match status" value="2"/>
</dbReference>
<proteinExistence type="inferred from homology"/>
<organism>
    <name type="scientific">Sinorhizobium medicae (strain WSM419)</name>
    <name type="common">Ensifer medicae</name>
    <dbReference type="NCBI Taxonomy" id="366394"/>
    <lineage>
        <taxon>Bacteria</taxon>
        <taxon>Pseudomonadati</taxon>
        <taxon>Pseudomonadota</taxon>
        <taxon>Alphaproteobacteria</taxon>
        <taxon>Hyphomicrobiales</taxon>
        <taxon>Rhizobiaceae</taxon>
        <taxon>Sinorhizobium/Ensifer group</taxon>
        <taxon>Sinorhizobium</taxon>
    </lineage>
</organism>
<accession>A6U9L9</accession>
<reference key="1">
    <citation type="submission" date="2007-06" db="EMBL/GenBank/DDBJ databases">
        <title>Complete sequence of Sinorhizobium medicae WSM419 chromosome.</title>
        <authorList>
            <consortium name="US DOE Joint Genome Institute"/>
            <person name="Copeland A."/>
            <person name="Lucas S."/>
            <person name="Lapidus A."/>
            <person name="Barry K."/>
            <person name="Glavina del Rio T."/>
            <person name="Dalin E."/>
            <person name="Tice H."/>
            <person name="Pitluck S."/>
            <person name="Chain P."/>
            <person name="Malfatti S."/>
            <person name="Shin M."/>
            <person name="Vergez L."/>
            <person name="Schmutz J."/>
            <person name="Larimer F."/>
            <person name="Land M."/>
            <person name="Hauser L."/>
            <person name="Kyrpides N."/>
            <person name="Mikhailova N."/>
            <person name="Reeve W.G."/>
            <person name="Richardson P."/>
        </authorList>
    </citation>
    <scope>NUCLEOTIDE SEQUENCE [LARGE SCALE GENOMIC DNA]</scope>
    <source>
        <strain>WSM419</strain>
    </source>
</reference>
<name>PURL_SINMW</name>
<sequence length="743" mass="79085">MTISNTRPITPDLIASHGLKPDEYERILNLIGREPTFTELGIFSAMWNEHCSYKSSKKWLRTLPTKGPRVIQGPGENAGVVDIDDGDCVVFKMESHNHPSYIEPYQGAATGVGGILRDVFTMGARPIAAMNALRFGSPDHPKTRHLVSGVVAGVGGYGNSFGVPTVGGEVEFDARYNGNILVNAFAAGLAKTDAIFYSKAEGVGLPVVYLGAKTGRDGVGGATMASAEFDESIEEKRPTVQVGDPFTEKCLLEACLELMQTGAVIAIQDMGAAGLTCSAVEMGAKGDLGIELDLDKVPVREERMTAYEMMLSESQERMLMVLRPEKEEEAKAIFVKWGLDFAIVGKTTDDLRFRILHQGEEVANLPIKELGDEAPEYDRPWTPAKVPSPLATNDIPQADVADTLLQLVGSANNSSRRWVYEQYDTLIQGNSLQLPGGDAGVVRVEGHEAKALAFSSDVTPRYVEADPFEGGKQAVAECWRNLTATGALPLAATDNLNFGNPERPEIMSQLVHAIKGIGEACQALDFPIVSGNVSLYNETNGQAILPTPTIGGVGLVRDWSKMARIRFAVADETILLAGAPKSWGTHIGQSVYMRDIHGRTDGPAPHVDLAHERKVGDFVRGLIGDGLVTAVHDCSSGGLALAVAEMAMASGIGATIAAPAEHDAIPVFYGEDQGRYVVTVANGAVETVAARAKAAGVALPVIGRTGGDAVKLGDARPVSVNALRSAHEAWFPNYMGGDLAPDN</sequence>
<protein>
    <recommendedName>
        <fullName evidence="1">Phosphoribosylformylglycinamidine synthase subunit PurL</fullName>
        <shortName evidence="1">FGAM synthase</shortName>
        <ecNumber evidence="1">6.3.5.3</ecNumber>
    </recommendedName>
    <alternativeName>
        <fullName evidence="1">Formylglycinamide ribonucleotide amidotransferase subunit II</fullName>
        <shortName evidence="1">FGAR amidotransferase II</shortName>
        <shortName evidence="1">FGAR-AT II</shortName>
    </alternativeName>
    <alternativeName>
        <fullName evidence="1">Glutamine amidotransferase PurL</fullName>
    </alternativeName>
    <alternativeName>
        <fullName evidence="1">Phosphoribosylformylglycinamidine synthase subunit II</fullName>
    </alternativeName>
</protein>
<gene>
    <name evidence="1" type="primary">purL</name>
    <name type="ordered locus">Smed_1505</name>
</gene>
<evidence type="ECO:0000255" key="1">
    <source>
        <dbReference type="HAMAP-Rule" id="MF_00420"/>
    </source>
</evidence>